<evidence type="ECO:0000255" key="1">
    <source>
        <dbReference type="HAMAP-Rule" id="MF_01271"/>
    </source>
</evidence>
<evidence type="ECO:0000305" key="2"/>
<comment type="function">
    <text evidence="1">Catalyzes the phosphorylation of N-acetyl-D-glucosamine (GlcNAc) derived from cell-wall degradation, yielding GlcNAc-6-P.</text>
</comment>
<comment type="catalytic activity">
    <reaction evidence="1">
        <text>N-acetyl-D-glucosamine + ATP = N-acetyl-D-glucosamine 6-phosphate + ADP + H(+)</text>
        <dbReference type="Rhea" id="RHEA:17417"/>
        <dbReference type="ChEBI" id="CHEBI:15378"/>
        <dbReference type="ChEBI" id="CHEBI:30616"/>
        <dbReference type="ChEBI" id="CHEBI:57513"/>
        <dbReference type="ChEBI" id="CHEBI:456216"/>
        <dbReference type="ChEBI" id="CHEBI:506227"/>
        <dbReference type="EC" id="2.7.1.59"/>
    </reaction>
</comment>
<comment type="pathway">
    <text evidence="1">Cell wall biogenesis; peptidoglycan recycling.</text>
</comment>
<comment type="similarity">
    <text evidence="1">Belongs to the ROK (NagC/XylR) family. NagK subfamily.</text>
</comment>
<comment type="sequence caution" evidence="2">
    <conflict type="erroneous initiation">
        <sequence resource="EMBL-CDS" id="BAC94483"/>
    </conflict>
</comment>
<proteinExistence type="inferred from homology"/>
<name>NAGK_VIBVY</name>
<organism>
    <name type="scientific">Vibrio vulnificus (strain YJ016)</name>
    <dbReference type="NCBI Taxonomy" id="196600"/>
    <lineage>
        <taxon>Bacteria</taxon>
        <taxon>Pseudomonadati</taxon>
        <taxon>Pseudomonadota</taxon>
        <taxon>Gammaproteobacteria</taxon>
        <taxon>Vibrionales</taxon>
        <taxon>Vibrionaceae</taxon>
        <taxon>Vibrio</taxon>
    </lineage>
</organism>
<keyword id="KW-0067">ATP-binding</keyword>
<keyword id="KW-0119">Carbohydrate metabolism</keyword>
<keyword id="KW-0418">Kinase</keyword>
<keyword id="KW-0479">Metal-binding</keyword>
<keyword id="KW-0547">Nucleotide-binding</keyword>
<keyword id="KW-0808">Transferase</keyword>
<keyword id="KW-0862">Zinc</keyword>
<gene>
    <name evidence="1" type="primary">nagK</name>
    <name type="ordered locus">VV1719</name>
</gene>
<dbReference type="EC" id="2.7.1.59" evidence="1"/>
<dbReference type="EMBL" id="BA000037">
    <property type="protein sequence ID" value="BAC94483.1"/>
    <property type="status" value="ALT_INIT"/>
    <property type="molecule type" value="Genomic_DNA"/>
</dbReference>
<dbReference type="RefSeq" id="WP_011080420.1">
    <property type="nucleotide sequence ID" value="NC_005139.1"/>
</dbReference>
<dbReference type="SMR" id="Q7MKQ9"/>
<dbReference type="STRING" id="672.VV93_v1c16110"/>
<dbReference type="KEGG" id="vvy:VV1719"/>
<dbReference type="eggNOG" id="COG1940">
    <property type="taxonomic scope" value="Bacteria"/>
</dbReference>
<dbReference type="HOGENOM" id="CLU_036604_0_3_6"/>
<dbReference type="UniPathway" id="UPA00544"/>
<dbReference type="Proteomes" id="UP000002675">
    <property type="component" value="Chromosome I"/>
</dbReference>
<dbReference type="GO" id="GO:0005524">
    <property type="term" value="F:ATP binding"/>
    <property type="evidence" value="ECO:0007669"/>
    <property type="project" value="UniProtKB-UniRule"/>
</dbReference>
<dbReference type="GO" id="GO:0045127">
    <property type="term" value="F:N-acetylglucosamine kinase activity"/>
    <property type="evidence" value="ECO:0007669"/>
    <property type="project" value="UniProtKB-UniRule"/>
</dbReference>
<dbReference type="GO" id="GO:0008270">
    <property type="term" value="F:zinc ion binding"/>
    <property type="evidence" value="ECO:0007669"/>
    <property type="project" value="UniProtKB-UniRule"/>
</dbReference>
<dbReference type="GO" id="GO:0006044">
    <property type="term" value="P:N-acetylglucosamine metabolic process"/>
    <property type="evidence" value="ECO:0007669"/>
    <property type="project" value="UniProtKB-UniRule"/>
</dbReference>
<dbReference type="GO" id="GO:0009254">
    <property type="term" value="P:peptidoglycan turnover"/>
    <property type="evidence" value="ECO:0007669"/>
    <property type="project" value="UniProtKB-UniRule"/>
</dbReference>
<dbReference type="CDD" id="cd24057">
    <property type="entry name" value="ASKHA_NBD_ROK_NAGK"/>
    <property type="match status" value="1"/>
</dbReference>
<dbReference type="FunFam" id="3.30.420.40:FF:000049">
    <property type="entry name" value="N-acetyl-D-glucosamine kinase"/>
    <property type="match status" value="1"/>
</dbReference>
<dbReference type="FunFam" id="3.30.420.40:FF:000051">
    <property type="entry name" value="N-acetyl-D-glucosamine kinase"/>
    <property type="match status" value="1"/>
</dbReference>
<dbReference type="Gene3D" id="3.30.420.40">
    <property type="match status" value="2"/>
</dbReference>
<dbReference type="HAMAP" id="MF_01271">
    <property type="entry name" value="GlcNAc_kinase"/>
    <property type="match status" value="1"/>
</dbReference>
<dbReference type="InterPro" id="IPR043129">
    <property type="entry name" value="ATPase_NBD"/>
</dbReference>
<dbReference type="InterPro" id="IPR023505">
    <property type="entry name" value="N-acetyl-D-glucosamine_kinase"/>
</dbReference>
<dbReference type="InterPro" id="IPR000600">
    <property type="entry name" value="ROK"/>
</dbReference>
<dbReference type="InterPro" id="IPR049874">
    <property type="entry name" value="ROK_cs"/>
</dbReference>
<dbReference type="NCBIfam" id="NF009835">
    <property type="entry name" value="PRK13310.1"/>
    <property type="match status" value="1"/>
</dbReference>
<dbReference type="PANTHER" id="PTHR18964:SF162">
    <property type="entry name" value="N-ACETYL-D-GLUCOSAMINE KINASE"/>
    <property type="match status" value="1"/>
</dbReference>
<dbReference type="PANTHER" id="PTHR18964">
    <property type="entry name" value="ROK (REPRESSOR, ORF, KINASE) FAMILY"/>
    <property type="match status" value="1"/>
</dbReference>
<dbReference type="Pfam" id="PF00480">
    <property type="entry name" value="ROK"/>
    <property type="match status" value="1"/>
</dbReference>
<dbReference type="SUPFAM" id="SSF53067">
    <property type="entry name" value="Actin-like ATPase domain"/>
    <property type="match status" value="1"/>
</dbReference>
<dbReference type="PROSITE" id="PS01125">
    <property type="entry name" value="ROK"/>
    <property type="match status" value="1"/>
</dbReference>
<sequence>MYYGFDVGGTKIEFGAFNEKLERVATERVPTPTDDYPLLLETIAGLVAKYDQEFACEGKIGLGLPGMEDADDATVLTVNVPAAKGKPLRADLEAKIGRSVKIENDANCFALSEAWDEELQDAPSVMGLILGTGFGGGLIYEGKVFSGRNNVAGELGHMRLPLDAWFHLGDNAPLLGCGCGKKGCLDSYLSGRGFELLYAHYYGEEKKAIDIIKANAAGDEKAAEHVERFMELLAICFGNIFTANDPHVVALGGGLSNFELIYEEMPKRVPKYLLSVAKCPKIIKAKHGDSGGVRGAAFLNIKG</sequence>
<protein>
    <recommendedName>
        <fullName evidence="1">N-acetyl-D-glucosamine kinase</fullName>
        <ecNumber evidence="1">2.7.1.59</ecNumber>
    </recommendedName>
    <alternativeName>
        <fullName evidence="1">GlcNAc kinase</fullName>
    </alternativeName>
</protein>
<accession>Q7MKQ9</accession>
<feature type="chain" id="PRO_0000270123" description="N-acetyl-D-glucosamine kinase">
    <location>
        <begin position="1"/>
        <end position="303"/>
    </location>
</feature>
<feature type="binding site" evidence="1">
    <location>
        <begin position="4"/>
        <end position="11"/>
    </location>
    <ligand>
        <name>ATP</name>
        <dbReference type="ChEBI" id="CHEBI:30616"/>
    </ligand>
</feature>
<feature type="binding site" evidence="1">
    <location>
        <begin position="133"/>
        <end position="140"/>
    </location>
    <ligand>
        <name>ATP</name>
        <dbReference type="ChEBI" id="CHEBI:30616"/>
    </ligand>
</feature>
<feature type="binding site" evidence="1">
    <location>
        <position position="157"/>
    </location>
    <ligand>
        <name>Zn(2+)</name>
        <dbReference type="ChEBI" id="CHEBI:29105"/>
    </ligand>
</feature>
<feature type="binding site" evidence="1">
    <location>
        <position position="177"/>
    </location>
    <ligand>
        <name>Zn(2+)</name>
        <dbReference type="ChEBI" id="CHEBI:29105"/>
    </ligand>
</feature>
<feature type="binding site" evidence="1">
    <location>
        <position position="179"/>
    </location>
    <ligand>
        <name>Zn(2+)</name>
        <dbReference type="ChEBI" id="CHEBI:29105"/>
    </ligand>
</feature>
<feature type="binding site" evidence="1">
    <location>
        <position position="184"/>
    </location>
    <ligand>
        <name>Zn(2+)</name>
        <dbReference type="ChEBI" id="CHEBI:29105"/>
    </ligand>
</feature>
<reference key="1">
    <citation type="journal article" date="2003" name="Genome Res.">
        <title>Comparative genome analysis of Vibrio vulnificus, a marine pathogen.</title>
        <authorList>
            <person name="Chen C.-Y."/>
            <person name="Wu K.-M."/>
            <person name="Chang Y.-C."/>
            <person name="Chang C.-H."/>
            <person name="Tsai H.-C."/>
            <person name="Liao T.-L."/>
            <person name="Liu Y.-M."/>
            <person name="Chen H.-J."/>
            <person name="Shen A.B.-T."/>
            <person name="Li J.-C."/>
            <person name="Su T.-L."/>
            <person name="Shao C.-P."/>
            <person name="Lee C.-T."/>
            <person name="Hor L.-I."/>
            <person name="Tsai S.-F."/>
        </authorList>
    </citation>
    <scope>NUCLEOTIDE SEQUENCE [LARGE SCALE GENOMIC DNA]</scope>
    <source>
        <strain>YJ016</strain>
    </source>
</reference>